<protein>
    <recommendedName>
        <fullName evidence="12">Protein-lysine N-methyltransferase SMYD4</fullName>
        <ecNumber evidence="11">2.1.1.-</ecNumber>
    </recommendedName>
    <alternativeName>
        <fullName>SET and MYND domain-containing protein 4</fullName>
    </alternativeName>
</protein>
<organism>
    <name type="scientific">Homo sapiens</name>
    <name type="common">Human</name>
    <dbReference type="NCBI Taxonomy" id="9606"/>
    <lineage>
        <taxon>Eukaryota</taxon>
        <taxon>Metazoa</taxon>
        <taxon>Chordata</taxon>
        <taxon>Craniata</taxon>
        <taxon>Vertebrata</taxon>
        <taxon>Euteleostomi</taxon>
        <taxon>Mammalia</taxon>
        <taxon>Eutheria</taxon>
        <taxon>Euarchontoglires</taxon>
        <taxon>Primates</taxon>
        <taxon>Haplorrhini</taxon>
        <taxon>Catarrhini</taxon>
        <taxon>Hominidae</taxon>
        <taxon>Homo</taxon>
    </lineage>
</organism>
<reference key="1">
    <citation type="journal article" date="2004" name="Nat. Genet.">
        <title>Complete sequencing and characterization of 21,243 full-length human cDNAs.</title>
        <authorList>
            <person name="Ota T."/>
            <person name="Suzuki Y."/>
            <person name="Nishikawa T."/>
            <person name="Otsuki T."/>
            <person name="Sugiyama T."/>
            <person name="Irie R."/>
            <person name="Wakamatsu A."/>
            <person name="Hayashi K."/>
            <person name="Sato H."/>
            <person name="Nagai K."/>
            <person name="Kimura K."/>
            <person name="Makita H."/>
            <person name="Sekine M."/>
            <person name="Obayashi M."/>
            <person name="Nishi T."/>
            <person name="Shibahara T."/>
            <person name="Tanaka T."/>
            <person name="Ishii S."/>
            <person name="Yamamoto J."/>
            <person name="Saito K."/>
            <person name="Kawai Y."/>
            <person name="Isono Y."/>
            <person name="Nakamura Y."/>
            <person name="Nagahari K."/>
            <person name="Murakami K."/>
            <person name="Yasuda T."/>
            <person name="Iwayanagi T."/>
            <person name="Wagatsuma M."/>
            <person name="Shiratori A."/>
            <person name="Sudo H."/>
            <person name="Hosoiri T."/>
            <person name="Kaku Y."/>
            <person name="Kodaira H."/>
            <person name="Kondo H."/>
            <person name="Sugawara M."/>
            <person name="Takahashi M."/>
            <person name="Kanda K."/>
            <person name="Yokoi T."/>
            <person name="Furuya T."/>
            <person name="Kikkawa E."/>
            <person name="Omura Y."/>
            <person name="Abe K."/>
            <person name="Kamihara K."/>
            <person name="Katsuta N."/>
            <person name="Sato K."/>
            <person name="Tanikawa M."/>
            <person name="Yamazaki M."/>
            <person name="Ninomiya K."/>
            <person name="Ishibashi T."/>
            <person name="Yamashita H."/>
            <person name="Murakawa K."/>
            <person name="Fujimori K."/>
            <person name="Tanai H."/>
            <person name="Kimata M."/>
            <person name="Watanabe M."/>
            <person name="Hiraoka S."/>
            <person name="Chiba Y."/>
            <person name="Ishida S."/>
            <person name="Ono Y."/>
            <person name="Takiguchi S."/>
            <person name="Watanabe S."/>
            <person name="Yosida M."/>
            <person name="Hotuta T."/>
            <person name="Kusano J."/>
            <person name="Kanehori K."/>
            <person name="Takahashi-Fujii A."/>
            <person name="Hara H."/>
            <person name="Tanase T.-O."/>
            <person name="Nomura Y."/>
            <person name="Togiya S."/>
            <person name="Komai F."/>
            <person name="Hara R."/>
            <person name="Takeuchi K."/>
            <person name="Arita M."/>
            <person name="Imose N."/>
            <person name="Musashino K."/>
            <person name="Yuuki H."/>
            <person name="Oshima A."/>
            <person name="Sasaki N."/>
            <person name="Aotsuka S."/>
            <person name="Yoshikawa Y."/>
            <person name="Matsunawa H."/>
            <person name="Ichihara T."/>
            <person name="Shiohata N."/>
            <person name="Sano S."/>
            <person name="Moriya S."/>
            <person name="Momiyama H."/>
            <person name="Satoh N."/>
            <person name="Takami S."/>
            <person name="Terashima Y."/>
            <person name="Suzuki O."/>
            <person name="Nakagawa S."/>
            <person name="Senoh A."/>
            <person name="Mizoguchi H."/>
            <person name="Goto Y."/>
            <person name="Shimizu F."/>
            <person name="Wakebe H."/>
            <person name="Hishigaki H."/>
            <person name="Watanabe T."/>
            <person name="Sugiyama A."/>
            <person name="Takemoto M."/>
            <person name="Kawakami B."/>
            <person name="Yamazaki M."/>
            <person name="Watanabe K."/>
            <person name="Kumagai A."/>
            <person name="Itakura S."/>
            <person name="Fukuzumi Y."/>
            <person name="Fujimori Y."/>
            <person name="Komiyama M."/>
            <person name="Tashiro H."/>
            <person name="Tanigami A."/>
            <person name="Fujiwara T."/>
            <person name="Ono T."/>
            <person name="Yamada K."/>
            <person name="Fujii Y."/>
            <person name="Ozaki K."/>
            <person name="Hirao M."/>
            <person name="Ohmori Y."/>
            <person name="Kawabata A."/>
            <person name="Hikiji T."/>
            <person name="Kobatake N."/>
            <person name="Inagaki H."/>
            <person name="Ikema Y."/>
            <person name="Okamoto S."/>
            <person name="Okitani R."/>
            <person name="Kawakami T."/>
            <person name="Noguchi S."/>
            <person name="Itoh T."/>
            <person name="Shigeta K."/>
            <person name="Senba T."/>
            <person name="Matsumura K."/>
            <person name="Nakajima Y."/>
            <person name="Mizuno T."/>
            <person name="Morinaga M."/>
            <person name="Sasaki M."/>
            <person name="Togashi T."/>
            <person name="Oyama M."/>
            <person name="Hata H."/>
            <person name="Watanabe M."/>
            <person name="Komatsu T."/>
            <person name="Mizushima-Sugano J."/>
            <person name="Satoh T."/>
            <person name="Shirai Y."/>
            <person name="Takahashi Y."/>
            <person name="Nakagawa K."/>
            <person name="Okumura K."/>
            <person name="Nagase T."/>
            <person name="Nomura N."/>
            <person name="Kikuchi H."/>
            <person name="Masuho Y."/>
            <person name="Yamashita R."/>
            <person name="Nakai K."/>
            <person name="Yada T."/>
            <person name="Nakamura Y."/>
            <person name="Ohara O."/>
            <person name="Isogai T."/>
            <person name="Sugano S."/>
        </authorList>
    </citation>
    <scope>NUCLEOTIDE SEQUENCE [LARGE SCALE MRNA]</scope>
    <scope>VARIANTS ILE-131 AND CYS-727</scope>
    <source>
        <tissue>Cerebellum</tissue>
        <tissue>Tongue</tissue>
    </source>
</reference>
<reference key="2">
    <citation type="journal article" date="2004" name="Genome Res.">
        <title>The status, quality, and expansion of the NIH full-length cDNA project: the Mammalian Gene Collection (MGC).</title>
        <authorList>
            <consortium name="The MGC Project Team"/>
        </authorList>
    </citation>
    <scope>NUCLEOTIDE SEQUENCE [LARGE SCALE MRNA]</scope>
    <scope>VARIANTS ILE-131 AND CYS-727</scope>
    <source>
        <tissue>Brain</tissue>
    </source>
</reference>
<reference key="3">
    <citation type="journal article" date="2001" name="DNA Res.">
        <title>Prediction of the coding sequences of unidentified human genes. XXI. The complete sequences of 60 new cDNA clones from brain which code for large proteins.</title>
        <authorList>
            <person name="Nagase T."/>
            <person name="Kikuno R."/>
            <person name="Ohara O."/>
        </authorList>
    </citation>
    <scope>NUCLEOTIDE SEQUENCE [LARGE SCALE MRNA] OF 197-754</scope>
    <scope>VARIANTS TRP-562 AND CYS-727</scope>
    <source>
        <tissue>Brain</tissue>
    </source>
</reference>
<reference key="4">
    <citation type="journal article" date="2018" name="PLoS Genet.">
        <title>The roles of SMYD4 in epigenetic regulation of cardiac development in zebrafish.</title>
        <authorList>
            <person name="Xiao D."/>
            <person name="Wang H."/>
            <person name="Hao L."/>
            <person name="Guo X."/>
            <person name="Ma X."/>
            <person name="Qian Y."/>
            <person name="Chen H."/>
            <person name="Ma J."/>
            <person name="Zhang J."/>
            <person name="Sheng W."/>
            <person name="Shou W."/>
            <person name="Huang G."/>
            <person name="Ma D."/>
        </authorList>
    </citation>
    <scope>VARIANTS ASP-345 AND GLN-579</scope>
    <scope>CHARACTERIZATION OF VARIANT ASP-345</scope>
    <scope>FUNCTION</scope>
    <scope>INTERACTION WITH HDAC1</scope>
</reference>
<reference key="5">
    <citation type="journal article" date="2011" name="Nature">
        <title>Exome sequencing identifies frequent mutation of the SWI/SNF complex gene PBRM1 in renal carcinoma.</title>
        <authorList>
            <person name="Varela I."/>
            <person name="Tarpey P."/>
            <person name="Raine K."/>
            <person name="Huang D."/>
            <person name="Ong C.K."/>
            <person name="Stephens P."/>
            <person name="Davies H."/>
            <person name="Jones D."/>
            <person name="Lin M.L."/>
            <person name="Teague J."/>
            <person name="Bignell G."/>
            <person name="Butler A."/>
            <person name="Cho J."/>
            <person name="Dalgliesh G.L."/>
            <person name="Galappaththige D."/>
            <person name="Greenman C."/>
            <person name="Hardy C."/>
            <person name="Jia M."/>
            <person name="Latimer C."/>
            <person name="Lau K.W."/>
            <person name="Marshall J."/>
            <person name="McLaren S."/>
            <person name="Menzies A."/>
            <person name="Mudie L."/>
            <person name="Stebbings L."/>
            <person name="Largaespada D.A."/>
            <person name="Wessels L.F.A."/>
            <person name="Richard S."/>
            <person name="Kahnoski R.J."/>
            <person name="Anema J."/>
            <person name="Tuveson D.A."/>
            <person name="Perez-Mancera P.A."/>
            <person name="Mustonen V."/>
            <person name="Fischer A."/>
            <person name="Adams D.J."/>
            <person name="Rust A."/>
            <person name="Chan-On W."/>
            <person name="Subimerb C."/>
            <person name="Dykema K."/>
            <person name="Furge K."/>
            <person name="Campbell P.J."/>
            <person name="Teh B.T."/>
            <person name="Stratton M.R."/>
            <person name="Futreal P.A."/>
        </authorList>
    </citation>
    <scope>VARIANT PRO-601</scope>
</reference>
<reference key="6">
    <citation type="journal article" date="2024" name="Cancer Sci.">
        <title>SMYD4 monomethylates PRMT5 and forms a positive feedback loop to promote hepatocellular carcinoma progression.</title>
        <authorList>
            <person name="Zhou Z."/>
            <person name="Chen Z."/>
            <person name="Zhou Q."/>
            <person name="Meng S."/>
            <person name="Shi J."/>
            <person name="Mui S."/>
            <person name="Jiang H."/>
            <person name="Lin J."/>
            <person name="He G."/>
            <person name="Li W."/>
            <person name="Zhang J."/>
            <person name="Wang J."/>
            <person name="He C."/>
            <person name="Yan Y."/>
            <person name="Xiao Z."/>
        </authorList>
    </citation>
    <scope>FUNCTION</scope>
    <scope>CATALYTIC ACTIVITY</scope>
    <scope>SUBCELLULAR LOCATION</scope>
</reference>
<proteinExistence type="evidence at protein level"/>
<accession>Q8IYR2</accession>
<accession>Q8N1P2</accession>
<accession>Q8NAT0</accession>
<accession>Q96LV4</accession>
<accession>Q96PV2</accession>
<keyword id="KW-0963">Cytoplasm</keyword>
<keyword id="KW-0479">Metal-binding</keyword>
<keyword id="KW-0489">Methyltransferase</keyword>
<keyword id="KW-0539">Nucleus</keyword>
<keyword id="KW-1267">Proteomics identification</keyword>
<keyword id="KW-1185">Reference proteome</keyword>
<keyword id="KW-0949">S-adenosyl-L-methionine</keyword>
<keyword id="KW-0808">Transferase</keyword>
<keyword id="KW-0862">Zinc</keyword>
<keyword id="KW-0863">Zinc-finger</keyword>
<feature type="chain" id="PRO_0000227784" description="Protein-lysine N-methyltransferase SMYD4">
    <location>
        <begin position="1"/>
        <end position="804"/>
    </location>
</feature>
<feature type="domain" description="SET" evidence="5">
    <location>
        <begin position="233"/>
        <end position="574"/>
    </location>
</feature>
<feature type="zinc finger region" description="MYND-type" evidence="4">
    <location>
        <begin position="296"/>
        <end position="335"/>
    </location>
</feature>
<feature type="binding site" evidence="1">
    <location>
        <begin position="112"/>
        <end position="114"/>
    </location>
    <ligand>
        <name>S-adenosyl-L-methionine</name>
        <dbReference type="ChEBI" id="CHEBI:59789"/>
    </ligand>
</feature>
<feature type="binding site" evidence="4">
    <location>
        <position position="296"/>
    </location>
    <ligand>
        <name>Zn(2+)</name>
        <dbReference type="ChEBI" id="CHEBI:29105"/>
        <label>1</label>
    </ligand>
</feature>
<feature type="binding site" evidence="4">
    <location>
        <position position="299"/>
    </location>
    <ligand>
        <name>Zn(2+)</name>
        <dbReference type="ChEBI" id="CHEBI:29105"/>
        <label>1</label>
    </ligand>
</feature>
<feature type="binding site" evidence="4">
    <location>
        <position position="309"/>
    </location>
    <ligand>
        <name>Zn(2+)</name>
        <dbReference type="ChEBI" id="CHEBI:29105"/>
        <label>2</label>
    </ligand>
</feature>
<feature type="binding site" evidence="4">
    <location>
        <position position="312"/>
    </location>
    <ligand>
        <name>Zn(2+)</name>
        <dbReference type="ChEBI" id="CHEBI:29105"/>
        <label>2</label>
    </ligand>
</feature>
<feature type="binding site" evidence="4">
    <location>
        <position position="318"/>
    </location>
    <ligand>
        <name>Zn(2+)</name>
        <dbReference type="ChEBI" id="CHEBI:29105"/>
        <label>1</label>
    </ligand>
</feature>
<feature type="binding site" evidence="4">
    <location>
        <position position="322"/>
    </location>
    <ligand>
        <name>Zn(2+)</name>
        <dbReference type="ChEBI" id="CHEBI:29105"/>
        <label>1</label>
    </ligand>
</feature>
<feature type="binding site" evidence="4">
    <location>
        <position position="331"/>
    </location>
    <ligand>
        <name>Zn(2+)</name>
        <dbReference type="ChEBI" id="CHEBI:29105"/>
        <label>2</label>
    </ligand>
</feature>
<feature type="binding site" evidence="4">
    <location>
        <position position="335"/>
    </location>
    <ligand>
        <name>Zn(2+)</name>
        <dbReference type="ChEBI" id="CHEBI:29105"/>
        <label>2</label>
    </ligand>
</feature>
<feature type="binding site" evidence="5">
    <location>
        <position position="427"/>
    </location>
    <ligand>
        <name>S-adenosyl-L-methionine</name>
        <dbReference type="ChEBI" id="CHEBI:59789"/>
    </ligand>
</feature>
<feature type="binding site" evidence="3">
    <location>
        <begin position="539"/>
        <end position="540"/>
    </location>
    <ligand>
        <name>S-adenosyl-L-methionine</name>
        <dbReference type="ChEBI" id="CHEBI:59789"/>
    </ligand>
</feature>
<feature type="binding site" evidence="5">
    <location>
        <position position="573"/>
    </location>
    <ligand>
        <name>S-adenosyl-L-methionine</name>
        <dbReference type="ChEBI" id="CHEBI:59789"/>
    </ligand>
</feature>
<feature type="binding site" evidence="5">
    <location>
        <position position="595"/>
    </location>
    <ligand>
        <name>S-adenosyl-L-methionine</name>
        <dbReference type="ChEBI" id="CHEBI:59789"/>
    </ligand>
</feature>
<feature type="sequence variant" id="VAR_057495" description="In dbSNP:rs9907701.">
    <original>N</original>
    <variation>D</variation>
    <location>
        <position position="101"/>
    </location>
</feature>
<feature type="sequence variant" id="VAR_025626" description="In dbSNP:rs7224496." evidence="7 8">
    <original>R</original>
    <variation>I</variation>
    <location>
        <position position="131"/>
    </location>
</feature>
<feature type="sequence variant" id="VAR_057496" description="In dbSNP:rs9913923.">
    <original>G</original>
    <variation>S</variation>
    <location>
        <position position="236"/>
    </location>
</feature>
<feature type="sequence variant" id="VAR_084711" description="Found in a patient with congenital heart defect; uncertain significance; loss of interaction with HDAC1; fails to rescue the abnormal cardiac phenotypes defects in zebrafish morphants; dbSNP:rs759042432." evidence="10">
    <original>G</original>
    <variation>D</variation>
    <location>
        <position position="345"/>
    </location>
</feature>
<feature type="sequence variant" id="VAR_057497" description="In dbSNP:rs9890631.">
    <original>I</original>
    <variation>M</variation>
    <location>
        <position position="374"/>
    </location>
</feature>
<feature type="sequence variant" id="VAR_057498" description="In dbSNP:rs3809875.">
    <original>P</original>
    <variation>R</variation>
    <location>
        <position position="382"/>
    </location>
</feature>
<feature type="sequence variant" id="VAR_025628" description="In dbSNP:rs11549830." evidence="6">
    <original>R</original>
    <variation>W</variation>
    <location>
        <position position="562"/>
    </location>
</feature>
<feature type="sequence variant" id="VAR_084712" description="Found in a patient with congenital heart defect; uncertain significance; dbSNP:rs766983285." evidence="10">
    <original>R</original>
    <variation>Q</variation>
    <location>
        <position position="579"/>
    </location>
</feature>
<feature type="sequence variant" id="VAR_064755" description="Found in a renal cell carcinoma sample; somatic mutation." evidence="9">
    <original>A</original>
    <variation>P</variation>
    <location>
        <position position="601"/>
    </location>
</feature>
<feature type="sequence variant" id="VAR_025627" description="In dbSNP:rs9902398." evidence="6 7 8">
    <original>Y</original>
    <variation>C</variation>
    <location>
        <position position="727"/>
    </location>
</feature>
<feature type="sequence conflict" description="In Ref. 2; AAH35077." evidence="12" ref="2">
    <original>A</original>
    <variation>V</variation>
    <location>
        <position position="326"/>
    </location>
</feature>
<feature type="sequence conflict" description="In Ref. 1; BAC04538." evidence="12" ref="1">
    <original>H</original>
    <variation>R</variation>
    <location>
        <position position="511"/>
    </location>
</feature>
<feature type="sequence conflict" description="In Ref. 1; BAC04538." evidence="12" ref="1">
    <original>P</original>
    <variation>S</variation>
    <location>
        <position position="514"/>
    </location>
</feature>
<name>SMYD4_HUMAN</name>
<dbReference type="EC" id="2.1.1.-" evidence="11"/>
<dbReference type="EMBL" id="AK057769">
    <property type="protein sequence ID" value="BAB71564.1"/>
    <property type="molecule type" value="mRNA"/>
</dbReference>
<dbReference type="EMBL" id="AK095369">
    <property type="protein sequence ID" value="BAC04538.1"/>
    <property type="molecule type" value="mRNA"/>
</dbReference>
<dbReference type="EMBL" id="BC035077">
    <property type="protein sequence ID" value="AAH35077.1"/>
    <property type="molecule type" value="mRNA"/>
</dbReference>
<dbReference type="EMBL" id="AB067523">
    <property type="protein sequence ID" value="BAB67829.1"/>
    <property type="molecule type" value="mRNA"/>
</dbReference>
<dbReference type="CCDS" id="CCDS11013.1"/>
<dbReference type="RefSeq" id="NP_443160.2">
    <property type="nucleotide sequence ID" value="NM_052928.3"/>
</dbReference>
<dbReference type="RefSeq" id="XP_024306328.1">
    <property type="nucleotide sequence ID" value="XM_024450560.2"/>
</dbReference>
<dbReference type="SMR" id="Q8IYR2"/>
<dbReference type="BioGRID" id="125376">
    <property type="interactions" value="43"/>
</dbReference>
<dbReference type="FunCoup" id="Q8IYR2">
    <property type="interactions" value="2808"/>
</dbReference>
<dbReference type="IntAct" id="Q8IYR2">
    <property type="interactions" value="13"/>
</dbReference>
<dbReference type="MINT" id="Q8IYR2"/>
<dbReference type="STRING" id="9606.ENSP00000304360"/>
<dbReference type="GlyGen" id="Q8IYR2">
    <property type="glycosylation" value="3 sites, 1 O-linked glycan (1 site)"/>
</dbReference>
<dbReference type="iPTMnet" id="Q8IYR2"/>
<dbReference type="PhosphoSitePlus" id="Q8IYR2"/>
<dbReference type="BioMuta" id="SMYD4"/>
<dbReference type="DMDM" id="296452956"/>
<dbReference type="jPOST" id="Q8IYR2"/>
<dbReference type="MassIVE" id="Q8IYR2"/>
<dbReference type="PaxDb" id="9606-ENSP00000304360"/>
<dbReference type="PeptideAtlas" id="Q8IYR2"/>
<dbReference type="ProteomicsDB" id="71215"/>
<dbReference type="Pumba" id="Q8IYR2"/>
<dbReference type="Antibodypedia" id="22811">
    <property type="antibodies" value="217 antibodies from 28 providers"/>
</dbReference>
<dbReference type="DNASU" id="114826"/>
<dbReference type="Ensembl" id="ENST00000305513.12">
    <property type="protein sequence ID" value="ENSP00000304360.7"/>
    <property type="gene ID" value="ENSG00000186532.12"/>
</dbReference>
<dbReference type="GeneID" id="114826"/>
<dbReference type="KEGG" id="hsa:114826"/>
<dbReference type="MANE-Select" id="ENST00000305513.12">
    <property type="protein sequence ID" value="ENSP00000304360.7"/>
    <property type="RefSeq nucleotide sequence ID" value="NM_052928.3"/>
    <property type="RefSeq protein sequence ID" value="NP_443160.2"/>
</dbReference>
<dbReference type="UCSC" id="uc002ftm.5">
    <property type="organism name" value="human"/>
</dbReference>
<dbReference type="AGR" id="HGNC:21067"/>
<dbReference type="CTD" id="114826"/>
<dbReference type="DisGeNET" id="114826"/>
<dbReference type="GeneCards" id="SMYD4"/>
<dbReference type="HGNC" id="HGNC:21067">
    <property type="gene designation" value="SMYD4"/>
</dbReference>
<dbReference type="HPA" id="ENSG00000186532">
    <property type="expression patterns" value="Low tissue specificity"/>
</dbReference>
<dbReference type="MIM" id="619134">
    <property type="type" value="gene"/>
</dbReference>
<dbReference type="neXtProt" id="NX_Q8IYR2"/>
<dbReference type="OpenTargets" id="ENSG00000186532"/>
<dbReference type="PharmGKB" id="PA134925431"/>
<dbReference type="VEuPathDB" id="HostDB:ENSG00000186532"/>
<dbReference type="eggNOG" id="KOG2084">
    <property type="taxonomic scope" value="Eukaryota"/>
</dbReference>
<dbReference type="GeneTree" id="ENSGT00730000111079"/>
<dbReference type="HOGENOM" id="CLU_021727_0_0_1"/>
<dbReference type="InParanoid" id="Q8IYR2"/>
<dbReference type="OMA" id="FDCTCPA"/>
<dbReference type="OrthoDB" id="62495at2759"/>
<dbReference type="PAN-GO" id="Q8IYR2">
    <property type="GO annotations" value="4 GO annotations based on evolutionary models"/>
</dbReference>
<dbReference type="PhylomeDB" id="Q8IYR2"/>
<dbReference type="TreeFam" id="TF106441"/>
<dbReference type="PathwayCommons" id="Q8IYR2"/>
<dbReference type="SignaLink" id="Q8IYR2"/>
<dbReference type="BioGRID-ORCS" id="114826">
    <property type="hits" value="16 hits in 1170 CRISPR screens"/>
</dbReference>
<dbReference type="ChiTaRS" id="SMYD4">
    <property type="organism name" value="human"/>
</dbReference>
<dbReference type="GeneWiki" id="SMYD4"/>
<dbReference type="GenomeRNAi" id="114826"/>
<dbReference type="Pharos" id="Q8IYR2">
    <property type="development level" value="Tbio"/>
</dbReference>
<dbReference type="PRO" id="PR:Q8IYR2"/>
<dbReference type="Proteomes" id="UP000005640">
    <property type="component" value="Chromosome 17"/>
</dbReference>
<dbReference type="RNAct" id="Q8IYR2">
    <property type="molecule type" value="protein"/>
</dbReference>
<dbReference type="Bgee" id="ENSG00000186532">
    <property type="expression patterns" value="Expressed in gastrocnemius and 123 other cell types or tissues"/>
</dbReference>
<dbReference type="ExpressionAtlas" id="Q8IYR2">
    <property type="expression patterns" value="baseline and differential"/>
</dbReference>
<dbReference type="GO" id="GO:0005737">
    <property type="term" value="C:cytoplasm"/>
    <property type="evidence" value="ECO:0000250"/>
    <property type="project" value="UniProtKB"/>
</dbReference>
<dbReference type="GO" id="GO:0005634">
    <property type="term" value="C:nucleus"/>
    <property type="evidence" value="ECO:0000250"/>
    <property type="project" value="UniProtKB"/>
</dbReference>
<dbReference type="GO" id="GO:0042826">
    <property type="term" value="F:histone deacetylase binding"/>
    <property type="evidence" value="ECO:0000318"/>
    <property type="project" value="GO_Central"/>
</dbReference>
<dbReference type="GO" id="GO:0008168">
    <property type="term" value="F:methyltransferase activity"/>
    <property type="evidence" value="ECO:0007669"/>
    <property type="project" value="UniProtKB-KW"/>
</dbReference>
<dbReference type="GO" id="GO:0008270">
    <property type="term" value="F:zinc ion binding"/>
    <property type="evidence" value="ECO:0007669"/>
    <property type="project" value="UniProtKB-KW"/>
</dbReference>
<dbReference type="GO" id="GO:0007507">
    <property type="term" value="P:heart development"/>
    <property type="evidence" value="ECO:0000315"/>
    <property type="project" value="UniProtKB"/>
</dbReference>
<dbReference type="GO" id="GO:0032259">
    <property type="term" value="P:methylation"/>
    <property type="evidence" value="ECO:0007669"/>
    <property type="project" value="UniProtKB-KW"/>
</dbReference>
<dbReference type="CDD" id="cd10536">
    <property type="entry name" value="SET_SMYD4"/>
    <property type="match status" value="1"/>
</dbReference>
<dbReference type="Gene3D" id="6.10.140.2220">
    <property type="match status" value="1"/>
</dbReference>
<dbReference type="Gene3D" id="2.170.270.10">
    <property type="entry name" value="SET domain"/>
    <property type="match status" value="1"/>
</dbReference>
<dbReference type="Gene3D" id="1.25.40.10">
    <property type="entry name" value="Tetratricopeptide repeat domain"/>
    <property type="match status" value="2"/>
</dbReference>
<dbReference type="InterPro" id="IPR052097">
    <property type="entry name" value="SET-MYND_domain_protein"/>
</dbReference>
<dbReference type="InterPro" id="IPR001214">
    <property type="entry name" value="SET_dom"/>
</dbReference>
<dbReference type="InterPro" id="IPR046341">
    <property type="entry name" value="SET_dom_sf"/>
</dbReference>
<dbReference type="InterPro" id="IPR044421">
    <property type="entry name" value="SMYD4_SET"/>
</dbReference>
<dbReference type="InterPro" id="IPR011990">
    <property type="entry name" value="TPR-like_helical_dom_sf"/>
</dbReference>
<dbReference type="InterPro" id="IPR002893">
    <property type="entry name" value="Znf_MYND"/>
</dbReference>
<dbReference type="PANTHER" id="PTHR46165">
    <property type="entry name" value="SET AND MYND DOMAIN-CONTAINING PROTEIN 4"/>
    <property type="match status" value="1"/>
</dbReference>
<dbReference type="PANTHER" id="PTHR46165:SF2">
    <property type="entry name" value="SET AND MYND DOMAIN-CONTAINING PROTEIN 4"/>
    <property type="match status" value="1"/>
</dbReference>
<dbReference type="Pfam" id="PF00856">
    <property type="entry name" value="SET"/>
    <property type="match status" value="1"/>
</dbReference>
<dbReference type="Pfam" id="PF01753">
    <property type="entry name" value="zf-MYND"/>
    <property type="match status" value="1"/>
</dbReference>
<dbReference type="SUPFAM" id="SSF144232">
    <property type="entry name" value="HIT/MYND zinc finger-like"/>
    <property type="match status" value="1"/>
</dbReference>
<dbReference type="SUPFAM" id="SSF82199">
    <property type="entry name" value="SET domain"/>
    <property type="match status" value="1"/>
</dbReference>
<dbReference type="SUPFAM" id="SSF48452">
    <property type="entry name" value="TPR-like"/>
    <property type="match status" value="1"/>
</dbReference>
<dbReference type="PROSITE" id="PS50280">
    <property type="entry name" value="SET"/>
    <property type="match status" value="1"/>
</dbReference>
<dbReference type="PROSITE" id="PS01360">
    <property type="entry name" value="ZF_MYND_1"/>
    <property type="match status" value="1"/>
</dbReference>
<dbReference type="PROSITE" id="PS50865">
    <property type="entry name" value="ZF_MYND_2"/>
    <property type="match status" value="1"/>
</dbReference>
<evidence type="ECO:0000250" key="1"/>
<evidence type="ECO:0000250" key="2">
    <source>
        <dbReference type="UniProtKB" id="Q08C84"/>
    </source>
</evidence>
<evidence type="ECO:0000250" key="3">
    <source>
        <dbReference type="UniProtKB" id="Q9H7B4"/>
    </source>
</evidence>
<evidence type="ECO:0000255" key="4">
    <source>
        <dbReference type="PROSITE-ProRule" id="PRU00134"/>
    </source>
</evidence>
<evidence type="ECO:0000255" key="5">
    <source>
        <dbReference type="PROSITE-ProRule" id="PRU00190"/>
    </source>
</evidence>
<evidence type="ECO:0000269" key="6">
    <source>
    </source>
</evidence>
<evidence type="ECO:0000269" key="7">
    <source>
    </source>
</evidence>
<evidence type="ECO:0000269" key="8">
    <source>
    </source>
</evidence>
<evidence type="ECO:0000269" key="9">
    <source>
    </source>
</evidence>
<evidence type="ECO:0000269" key="10">
    <source>
    </source>
</evidence>
<evidence type="ECO:0000269" key="11">
    <source>
    </source>
</evidence>
<evidence type="ECO:0000305" key="12"/>
<evidence type="ECO:0000312" key="13">
    <source>
        <dbReference type="HGNC" id="HGNC:21067"/>
    </source>
</evidence>
<sequence>MDLPVDEWKSYLLQKWASLPTSVQVTISTAETLRDIFLHSSSLLQPEDELFLKRLSKGYLVGKDSDAPLFYREEGNKKFQEKDYTGAAVLYSKGVSHSRPNTEDMSLCHANRSAALFHLGQYETCLKDINRAQTHGYPERLQPKIMLRKAECLVALGRLQEASQTISDLERNFTATPALADVLPQTLQRNLHRLKMKMQEKDSLTESFPAALAKTLEDAALREENEQLSNASSSIGLCVDPLKGRCLVATKDILPGELLVQEDAFVSVLNPGELPPPHHGLDSKWDTRVTNGDLYCHRCLKHTLATVPCDGCSYAKYCSQECLQQAWELYHRTECPLGGLLLTLGVFCHIALRLTLLVGFEDVRKIITKLCDKISNKDICLPESNNQVKTLNYGLGESEKNGNIVETPIPGCDINGKYENNYNAVFNLLPHTENHSPEHKFLCALCVSALCRQLEAASLQAIPTERIVNSSQLKAAVTPELCPDVTIWGVAMLRHMLQLQCNAQAMTTIQHTGPKGSIVTDSRQVRLATGIFPVISLLNHSCSPNTSVSFISTVATIRASQRIRKGQEILHCYGPHKSRMGVAERQQKLRSQYFFDCACPACQTEAHRMAAGPRWEAFCCNSCGAPMQGDDVLRCGSRSCAESAVSRDHLVSRLQDLQQQVRVAQKLLRDGELERAVQRLSGCQRDAESFLWAEHAVVGEIADGLARACAALGDWQKSATHLQRSLYVVEVRHGPSSVEMGHELFKLAQIFFNGFAVPEALSTIQKAEEVLSLHCGPWDDEIQELQKMKSCLLDLPPTPVGPAL</sequence>
<comment type="function">
    <text evidence="2 11">Protein-lysine N-methyltransferase. Monomethylates PRMT5, modulating its transcriptional activity (PubMed:38438251). May also act as a histone methyltransferase (By similarity). Plays a critical role in cardiac development. Acts as a key epigenetic regulator of gene expression during cardiac development via its dual activities as a methyltransferase and negative regulator of HDAC1 (By similarity).</text>
</comment>
<comment type="catalytic activity">
    <reaction evidence="11">
        <text>L-lysyl-[protein] + S-adenosyl-L-methionine = N(6)-methyl-L-lysyl-[protein] + S-adenosyl-L-homocysteine + H(+)</text>
        <dbReference type="Rhea" id="RHEA:51736"/>
        <dbReference type="Rhea" id="RHEA-COMP:9752"/>
        <dbReference type="Rhea" id="RHEA-COMP:13053"/>
        <dbReference type="ChEBI" id="CHEBI:15378"/>
        <dbReference type="ChEBI" id="CHEBI:29969"/>
        <dbReference type="ChEBI" id="CHEBI:57856"/>
        <dbReference type="ChEBI" id="CHEBI:59789"/>
        <dbReference type="ChEBI" id="CHEBI:61929"/>
    </reaction>
</comment>
<comment type="subunit">
    <text evidence="10">Interacts (via MYND-type zinc finger) with HDAC1.</text>
</comment>
<comment type="subcellular location">
    <subcellularLocation>
        <location evidence="11">Nucleus</location>
    </subcellularLocation>
    <subcellularLocation>
        <location evidence="11">Cytoplasm</location>
    </subcellularLocation>
</comment>
<comment type="similarity">
    <text evidence="5">Belongs to the class V-like SAM-binding methyltransferase superfamily.</text>
</comment>
<gene>
    <name evidence="13" type="primary">SMYD4</name>
    <name type="synonym">KIAA1936</name>
</gene>